<comment type="function">
    <text evidence="1">Catalyzes the decarboxylation of 3-octaprenyl-4-hydroxy benzoate to 2-octaprenylphenol, an intermediate step in ubiquinone biosynthesis.</text>
</comment>
<comment type="catalytic activity">
    <reaction evidence="1">
        <text>a 4-hydroxy-3-(all-trans-polyprenyl)benzoate + H(+) = a 2-(all-trans-polyprenyl)phenol + CO2</text>
        <dbReference type="Rhea" id="RHEA:41680"/>
        <dbReference type="Rhea" id="RHEA-COMP:9514"/>
        <dbReference type="Rhea" id="RHEA-COMP:9516"/>
        <dbReference type="ChEBI" id="CHEBI:1269"/>
        <dbReference type="ChEBI" id="CHEBI:15378"/>
        <dbReference type="ChEBI" id="CHEBI:16526"/>
        <dbReference type="ChEBI" id="CHEBI:78396"/>
        <dbReference type="EC" id="4.1.1.98"/>
    </reaction>
</comment>
<comment type="cofactor">
    <cofactor evidence="1">
        <name>prenylated FMN</name>
        <dbReference type="ChEBI" id="CHEBI:87746"/>
    </cofactor>
    <text evidence="1">Binds 1 prenylated FMN per subunit.</text>
</comment>
<comment type="cofactor">
    <cofactor evidence="1">
        <name>Mn(2+)</name>
        <dbReference type="ChEBI" id="CHEBI:29035"/>
    </cofactor>
</comment>
<comment type="pathway">
    <text evidence="1">Cofactor biosynthesis; ubiquinone biosynthesis.</text>
</comment>
<comment type="subunit">
    <text evidence="1">Homohexamer.</text>
</comment>
<comment type="subcellular location">
    <subcellularLocation>
        <location evidence="1">Cell membrane</location>
        <topology evidence="1">Peripheral membrane protein</topology>
    </subcellularLocation>
</comment>
<comment type="similarity">
    <text evidence="1">Belongs to the UbiD family.</text>
</comment>
<evidence type="ECO:0000255" key="1">
    <source>
        <dbReference type="HAMAP-Rule" id="MF_01636"/>
    </source>
</evidence>
<keyword id="KW-1003">Cell membrane</keyword>
<keyword id="KW-0210">Decarboxylase</keyword>
<keyword id="KW-0285">Flavoprotein</keyword>
<keyword id="KW-0288">FMN</keyword>
<keyword id="KW-0456">Lyase</keyword>
<keyword id="KW-0464">Manganese</keyword>
<keyword id="KW-0472">Membrane</keyword>
<keyword id="KW-0479">Metal-binding</keyword>
<keyword id="KW-1185">Reference proteome</keyword>
<keyword id="KW-0831">Ubiquinone biosynthesis</keyword>
<proteinExistence type="inferred from homology"/>
<gene>
    <name evidence="1" type="primary">ubiD</name>
    <name type="ordered locus">NGO_1345</name>
</gene>
<feature type="chain" id="PRO_0000267673" description="3-octaprenyl-4-hydroxybenzoate carboxy-lyase">
    <location>
        <begin position="1"/>
        <end position="492"/>
    </location>
</feature>
<feature type="active site" description="Proton donor" evidence="1">
    <location>
        <position position="292"/>
    </location>
</feature>
<feature type="binding site" evidence="1">
    <location>
        <position position="177"/>
    </location>
    <ligand>
        <name>Mn(2+)</name>
        <dbReference type="ChEBI" id="CHEBI:29035"/>
    </ligand>
</feature>
<feature type="binding site" evidence="1">
    <location>
        <begin position="180"/>
        <end position="182"/>
    </location>
    <ligand>
        <name>prenylated FMN</name>
        <dbReference type="ChEBI" id="CHEBI:87746"/>
    </ligand>
</feature>
<feature type="binding site" evidence="1">
    <location>
        <begin position="194"/>
        <end position="196"/>
    </location>
    <ligand>
        <name>prenylated FMN</name>
        <dbReference type="ChEBI" id="CHEBI:87746"/>
    </ligand>
</feature>
<feature type="binding site" evidence="1">
    <location>
        <begin position="199"/>
        <end position="200"/>
    </location>
    <ligand>
        <name>prenylated FMN</name>
        <dbReference type="ChEBI" id="CHEBI:87746"/>
    </ligand>
</feature>
<feature type="binding site" evidence="1">
    <location>
        <position position="243"/>
    </location>
    <ligand>
        <name>Mn(2+)</name>
        <dbReference type="ChEBI" id="CHEBI:29035"/>
    </ligand>
</feature>
<name>UBID_NEIG1</name>
<dbReference type="EC" id="4.1.1.98" evidence="1"/>
<dbReference type="EMBL" id="AE004969">
    <property type="protein sequence ID" value="AAW89995.1"/>
    <property type="molecule type" value="Genomic_DNA"/>
</dbReference>
<dbReference type="RefSeq" id="WP_003691687.1">
    <property type="nucleotide sequence ID" value="NC_002946.2"/>
</dbReference>
<dbReference type="RefSeq" id="YP_208407.1">
    <property type="nucleotide sequence ID" value="NC_002946.2"/>
</dbReference>
<dbReference type="SMR" id="Q5F742"/>
<dbReference type="STRING" id="242231.NGO_1345"/>
<dbReference type="KEGG" id="ngo:NGO_1345"/>
<dbReference type="PATRIC" id="fig|242231.10.peg.1581"/>
<dbReference type="HOGENOM" id="CLU_023348_4_1_4"/>
<dbReference type="UniPathway" id="UPA00232"/>
<dbReference type="Proteomes" id="UP000000535">
    <property type="component" value="Chromosome"/>
</dbReference>
<dbReference type="GO" id="GO:0005829">
    <property type="term" value="C:cytosol"/>
    <property type="evidence" value="ECO:0007669"/>
    <property type="project" value="TreeGrafter"/>
</dbReference>
<dbReference type="GO" id="GO:0005886">
    <property type="term" value="C:plasma membrane"/>
    <property type="evidence" value="ECO:0007669"/>
    <property type="project" value="UniProtKB-SubCell"/>
</dbReference>
<dbReference type="GO" id="GO:0008694">
    <property type="term" value="F:3-octaprenyl-4-hydroxybenzoate carboxy-lyase activity"/>
    <property type="evidence" value="ECO:0007669"/>
    <property type="project" value="UniProtKB-UniRule"/>
</dbReference>
<dbReference type="GO" id="GO:0046872">
    <property type="term" value="F:metal ion binding"/>
    <property type="evidence" value="ECO:0007669"/>
    <property type="project" value="UniProtKB-KW"/>
</dbReference>
<dbReference type="GO" id="GO:0006744">
    <property type="term" value="P:ubiquinone biosynthetic process"/>
    <property type="evidence" value="ECO:0007669"/>
    <property type="project" value="UniProtKB-UniRule"/>
</dbReference>
<dbReference type="FunFam" id="1.20.5.570:FF:000001">
    <property type="entry name" value="3-octaprenyl-4-hydroxybenzoate carboxy-lyase"/>
    <property type="match status" value="1"/>
</dbReference>
<dbReference type="FunFam" id="3.40.1670.10:FF:000001">
    <property type="entry name" value="3-octaprenyl-4-hydroxybenzoate carboxy-lyase"/>
    <property type="match status" value="1"/>
</dbReference>
<dbReference type="Gene3D" id="1.20.5.570">
    <property type="entry name" value="Single helix bin"/>
    <property type="match status" value="1"/>
</dbReference>
<dbReference type="Gene3D" id="3.40.1670.10">
    <property type="entry name" value="UbiD C-terminal domain-like"/>
    <property type="match status" value="1"/>
</dbReference>
<dbReference type="HAMAP" id="MF_01636">
    <property type="entry name" value="UbiD"/>
    <property type="match status" value="1"/>
</dbReference>
<dbReference type="InterPro" id="IPR002830">
    <property type="entry name" value="UbiD"/>
</dbReference>
<dbReference type="InterPro" id="IPR049381">
    <property type="entry name" value="UbiD-like_C"/>
</dbReference>
<dbReference type="InterPro" id="IPR049383">
    <property type="entry name" value="UbiD-like_N"/>
</dbReference>
<dbReference type="InterPro" id="IPR023677">
    <property type="entry name" value="UbiD_bacteria"/>
</dbReference>
<dbReference type="InterPro" id="IPR048304">
    <property type="entry name" value="UbiD_Rift_dom"/>
</dbReference>
<dbReference type="NCBIfam" id="NF008175">
    <property type="entry name" value="PRK10922.1"/>
    <property type="match status" value="1"/>
</dbReference>
<dbReference type="NCBIfam" id="TIGR00148">
    <property type="entry name" value="UbiD family decarboxylase"/>
    <property type="match status" value="1"/>
</dbReference>
<dbReference type="PANTHER" id="PTHR30108">
    <property type="entry name" value="3-OCTAPRENYL-4-HYDROXYBENZOATE CARBOXY-LYASE-RELATED"/>
    <property type="match status" value="1"/>
</dbReference>
<dbReference type="PANTHER" id="PTHR30108:SF17">
    <property type="entry name" value="FERULIC ACID DECARBOXYLASE 1"/>
    <property type="match status" value="1"/>
</dbReference>
<dbReference type="Pfam" id="PF01977">
    <property type="entry name" value="UbiD"/>
    <property type="match status" value="1"/>
</dbReference>
<dbReference type="Pfam" id="PF20696">
    <property type="entry name" value="UbiD_C"/>
    <property type="match status" value="1"/>
</dbReference>
<dbReference type="Pfam" id="PF20695">
    <property type="entry name" value="UbiD_N"/>
    <property type="match status" value="1"/>
</dbReference>
<dbReference type="SUPFAM" id="SSF50475">
    <property type="entry name" value="FMN-binding split barrel"/>
    <property type="match status" value="1"/>
</dbReference>
<dbReference type="SUPFAM" id="SSF143968">
    <property type="entry name" value="UbiD C-terminal domain-like"/>
    <property type="match status" value="1"/>
</dbReference>
<organism>
    <name type="scientific">Neisseria gonorrhoeae (strain ATCC 700825 / FA 1090)</name>
    <dbReference type="NCBI Taxonomy" id="242231"/>
    <lineage>
        <taxon>Bacteria</taxon>
        <taxon>Pseudomonadati</taxon>
        <taxon>Pseudomonadota</taxon>
        <taxon>Betaproteobacteria</taxon>
        <taxon>Neisseriales</taxon>
        <taxon>Neisseriaceae</taxon>
        <taxon>Neisseria</taxon>
    </lineage>
</organism>
<accession>Q5F742</accession>
<protein>
    <recommendedName>
        <fullName evidence="1">3-octaprenyl-4-hydroxybenzoate carboxy-lyase</fullName>
        <ecNumber evidence="1">4.1.1.98</ecNumber>
    </recommendedName>
    <alternativeName>
        <fullName evidence="1">Polyprenyl p-hydroxybenzoate decarboxylase</fullName>
    </alternativeName>
</protein>
<reference key="1">
    <citation type="submission" date="2003-03" db="EMBL/GenBank/DDBJ databases">
        <title>The complete genome sequence of Neisseria gonorrhoeae.</title>
        <authorList>
            <person name="Lewis L.A."/>
            <person name="Gillaspy A.F."/>
            <person name="McLaughlin R.E."/>
            <person name="Gipson M."/>
            <person name="Ducey T.F."/>
            <person name="Ownbey T."/>
            <person name="Hartman K."/>
            <person name="Nydick C."/>
            <person name="Carson M.B."/>
            <person name="Vaughn J."/>
            <person name="Thomson C."/>
            <person name="Song L."/>
            <person name="Lin S."/>
            <person name="Yuan X."/>
            <person name="Najar F."/>
            <person name="Zhan M."/>
            <person name="Ren Q."/>
            <person name="Zhu H."/>
            <person name="Qi S."/>
            <person name="Kenton S.M."/>
            <person name="Lai H."/>
            <person name="White J.D."/>
            <person name="Clifton S."/>
            <person name="Roe B.A."/>
            <person name="Dyer D.W."/>
        </authorList>
    </citation>
    <scope>NUCLEOTIDE SEQUENCE [LARGE SCALE GENOMIC DNA]</scope>
    <source>
        <strain>ATCC 700825 / FA 1090</strain>
    </source>
</reference>
<sequence>MKYKDLRDFIAMLEQQGKLKRVAHPVSPHLEMTEIADRVLRAEGPALLFENPVKPDGTRYDYPVLANLFGTPERVAMGMGADSVSKLREIGQTLAYLKEPEPPKGIKDAFSKLPLLKDIWSMAPNVVKNAPCQEIVWEGEDVDLYQLPIQHCWPEDVAPLVTWGLTVTRGPHKKRQNLGIYRQQLIGKNKLVMRWLSHRGGALDYQEFRKLNPDTPYPVAVVLGCDPSTILGAVTPVPDTLSEYQFAGLLRGSRTELVKCIGSDLQVPARAEIVLEGVIHPNETALEGPYGDHTGYYNEQGHFPVFTVERITMRENPIYHSTYTGKPPDEPAVLGVALNEVFVPLLQKQFSEITDFYLPPEGCSYRMAVVSMKKQYAGHAKRVMTGCWSFLRQFMYTKFIIVVDDDVNVRDWKEVIWAVTTRMDPVRDTVLVENTPIDYLDFASPVSGLGGKMGLDATSKWPGETDREWGRVIKKDPAVTVKIDGIWGKLGL</sequence>